<feature type="chain" id="PRO_0000339048" description="ATP synthase subunit alpha 1">
    <location>
        <begin position="1"/>
        <end position="519"/>
    </location>
</feature>
<feature type="binding site" evidence="1">
    <location>
        <begin position="172"/>
        <end position="179"/>
    </location>
    <ligand>
        <name>ATP</name>
        <dbReference type="ChEBI" id="CHEBI:30616"/>
    </ligand>
</feature>
<feature type="site" description="Required for activity" evidence="1">
    <location>
        <position position="365"/>
    </location>
</feature>
<name>ATPA1_PSYIN</name>
<organism>
    <name type="scientific">Psychromonas ingrahamii (strain DSM 17664 / CCUG 51855 / 37)</name>
    <dbReference type="NCBI Taxonomy" id="357804"/>
    <lineage>
        <taxon>Bacteria</taxon>
        <taxon>Pseudomonadati</taxon>
        <taxon>Pseudomonadota</taxon>
        <taxon>Gammaproteobacteria</taxon>
        <taxon>Alteromonadales</taxon>
        <taxon>Psychromonadaceae</taxon>
        <taxon>Psychromonas</taxon>
    </lineage>
</organism>
<protein>
    <recommendedName>
        <fullName evidence="1">ATP synthase subunit alpha 1</fullName>
        <ecNumber evidence="1">7.1.2.2</ecNumber>
    </recommendedName>
    <alternativeName>
        <fullName evidence="1">ATP synthase F1 sector subunit alpha 1</fullName>
    </alternativeName>
    <alternativeName>
        <fullName evidence="1">F-ATPase subunit alpha 1</fullName>
    </alternativeName>
</protein>
<comment type="function">
    <text evidence="1">Produces ATP from ADP in the presence of a proton gradient across the membrane. The alpha chain is a regulatory subunit.</text>
</comment>
<comment type="catalytic activity">
    <reaction evidence="1">
        <text>ATP + H2O + 4 H(+)(in) = ADP + phosphate + 5 H(+)(out)</text>
        <dbReference type="Rhea" id="RHEA:57720"/>
        <dbReference type="ChEBI" id="CHEBI:15377"/>
        <dbReference type="ChEBI" id="CHEBI:15378"/>
        <dbReference type="ChEBI" id="CHEBI:30616"/>
        <dbReference type="ChEBI" id="CHEBI:43474"/>
        <dbReference type="ChEBI" id="CHEBI:456216"/>
        <dbReference type="EC" id="7.1.2.2"/>
    </reaction>
</comment>
<comment type="subunit">
    <text evidence="1">F-type ATPases have 2 components, CF(1) - the catalytic core - and CF(0) - the membrane proton channel. CF(1) has five subunits: alpha(3), beta(3), gamma(1), delta(1), epsilon(1). CF(0) has three main subunits: a(1), b(2) and c(9-12). The alpha and beta chains form an alternating ring which encloses part of the gamma chain. CF(1) is attached to CF(0) by a central stalk formed by the gamma and epsilon chains, while a peripheral stalk is formed by the delta and b chains.</text>
</comment>
<comment type="subcellular location">
    <subcellularLocation>
        <location evidence="1">Cell inner membrane</location>
        <topology evidence="1">Peripheral membrane protein</topology>
    </subcellularLocation>
</comment>
<comment type="similarity">
    <text evidence="1">Belongs to the ATPase alpha/beta chains family.</text>
</comment>
<dbReference type="EC" id="7.1.2.2" evidence="1"/>
<dbReference type="EMBL" id="CP000510">
    <property type="protein sequence ID" value="ABM02327.1"/>
    <property type="molecule type" value="Genomic_DNA"/>
</dbReference>
<dbReference type="RefSeq" id="WP_011768886.1">
    <property type="nucleotide sequence ID" value="NC_008709.1"/>
</dbReference>
<dbReference type="SMR" id="A1SS62"/>
<dbReference type="STRING" id="357804.Ping_0470"/>
<dbReference type="KEGG" id="pin:Ping_0470"/>
<dbReference type="eggNOG" id="COG0056">
    <property type="taxonomic scope" value="Bacteria"/>
</dbReference>
<dbReference type="HOGENOM" id="CLU_010091_2_1_6"/>
<dbReference type="OrthoDB" id="9803053at2"/>
<dbReference type="Proteomes" id="UP000000639">
    <property type="component" value="Chromosome"/>
</dbReference>
<dbReference type="GO" id="GO:0005886">
    <property type="term" value="C:plasma membrane"/>
    <property type="evidence" value="ECO:0007669"/>
    <property type="project" value="UniProtKB-SubCell"/>
</dbReference>
<dbReference type="GO" id="GO:0045259">
    <property type="term" value="C:proton-transporting ATP synthase complex"/>
    <property type="evidence" value="ECO:0007669"/>
    <property type="project" value="UniProtKB-KW"/>
</dbReference>
<dbReference type="GO" id="GO:0043531">
    <property type="term" value="F:ADP binding"/>
    <property type="evidence" value="ECO:0007669"/>
    <property type="project" value="TreeGrafter"/>
</dbReference>
<dbReference type="GO" id="GO:0005524">
    <property type="term" value="F:ATP binding"/>
    <property type="evidence" value="ECO:0007669"/>
    <property type="project" value="UniProtKB-UniRule"/>
</dbReference>
<dbReference type="GO" id="GO:0046933">
    <property type="term" value="F:proton-transporting ATP synthase activity, rotational mechanism"/>
    <property type="evidence" value="ECO:0007669"/>
    <property type="project" value="UniProtKB-UniRule"/>
</dbReference>
<dbReference type="CDD" id="cd18113">
    <property type="entry name" value="ATP-synt_F1_alpha_C"/>
    <property type="match status" value="1"/>
</dbReference>
<dbReference type="CDD" id="cd18116">
    <property type="entry name" value="ATP-synt_F1_alpha_N"/>
    <property type="match status" value="1"/>
</dbReference>
<dbReference type="CDD" id="cd01132">
    <property type="entry name" value="F1-ATPase_alpha_CD"/>
    <property type="match status" value="1"/>
</dbReference>
<dbReference type="FunFam" id="3.40.50.300:FF:000002">
    <property type="entry name" value="ATP synthase subunit alpha"/>
    <property type="match status" value="1"/>
</dbReference>
<dbReference type="Gene3D" id="2.40.30.20">
    <property type="match status" value="1"/>
</dbReference>
<dbReference type="Gene3D" id="1.20.150.20">
    <property type="entry name" value="ATP synthase alpha/beta chain, C-terminal domain"/>
    <property type="match status" value="1"/>
</dbReference>
<dbReference type="Gene3D" id="3.40.50.300">
    <property type="entry name" value="P-loop containing nucleotide triphosphate hydrolases"/>
    <property type="match status" value="1"/>
</dbReference>
<dbReference type="HAMAP" id="MF_01346">
    <property type="entry name" value="ATP_synth_alpha_bact"/>
    <property type="match status" value="1"/>
</dbReference>
<dbReference type="InterPro" id="IPR017710">
    <property type="entry name" value="Alt_ATP_synth_F1_asu"/>
</dbReference>
<dbReference type="InterPro" id="IPR023366">
    <property type="entry name" value="ATP_synth_asu-like_sf"/>
</dbReference>
<dbReference type="InterPro" id="IPR000793">
    <property type="entry name" value="ATP_synth_asu_C"/>
</dbReference>
<dbReference type="InterPro" id="IPR038376">
    <property type="entry name" value="ATP_synth_asu_C_sf"/>
</dbReference>
<dbReference type="InterPro" id="IPR033732">
    <property type="entry name" value="ATP_synth_F1_a_nt-bd_dom"/>
</dbReference>
<dbReference type="InterPro" id="IPR005294">
    <property type="entry name" value="ATP_synth_F1_asu"/>
</dbReference>
<dbReference type="InterPro" id="IPR020003">
    <property type="entry name" value="ATPase_a/bsu_AS"/>
</dbReference>
<dbReference type="InterPro" id="IPR004100">
    <property type="entry name" value="ATPase_F1/V1/A1_a/bsu_N"/>
</dbReference>
<dbReference type="InterPro" id="IPR036121">
    <property type="entry name" value="ATPase_F1/V1/A1_a/bsu_N_sf"/>
</dbReference>
<dbReference type="InterPro" id="IPR000194">
    <property type="entry name" value="ATPase_F1/V1/A1_a/bsu_nucl-bd"/>
</dbReference>
<dbReference type="InterPro" id="IPR027417">
    <property type="entry name" value="P-loop_NTPase"/>
</dbReference>
<dbReference type="NCBIfam" id="TIGR03324">
    <property type="entry name" value="alt_F1F0_F1_al"/>
    <property type="match status" value="1"/>
</dbReference>
<dbReference type="NCBIfam" id="TIGR00962">
    <property type="entry name" value="atpA"/>
    <property type="match status" value="1"/>
</dbReference>
<dbReference type="NCBIfam" id="NF009884">
    <property type="entry name" value="PRK13343.1"/>
    <property type="match status" value="1"/>
</dbReference>
<dbReference type="PANTHER" id="PTHR48082">
    <property type="entry name" value="ATP SYNTHASE SUBUNIT ALPHA, MITOCHONDRIAL"/>
    <property type="match status" value="1"/>
</dbReference>
<dbReference type="PANTHER" id="PTHR48082:SF2">
    <property type="entry name" value="ATP SYNTHASE SUBUNIT ALPHA, MITOCHONDRIAL"/>
    <property type="match status" value="1"/>
</dbReference>
<dbReference type="Pfam" id="PF00006">
    <property type="entry name" value="ATP-synt_ab"/>
    <property type="match status" value="1"/>
</dbReference>
<dbReference type="Pfam" id="PF00306">
    <property type="entry name" value="ATP-synt_ab_C"/>
    <property type="match status" value="1"/>
</dbReference>
<dbReference type="Pfam" id="PF02874">
    <property type="entry name" value="ATP-synt_ab_N"/>
    <property type="match status" value="1"/>
</dbReference>
<dbReference type="SUPFAM" id="SSF47917">
    <property type="entry name" value="C-terminal domain of alpha and beta subunits of F1 ATP synthase"/>
    <property type="match status" value="1"/>
</dbReference>
<dbReference type="SUPFAM" id="SSF50615">
    <property type="entry name" value="N-terminal domain of alpha and beta subunits of F1 ATP synthase"/>
    <property type="match status" value="1"/>
</dbReference>
<dbReference type="SUPFAM" id="SSF52540">
    <property type="entry name" value="P-loop containing nucleoside triphosphate hydrolases"/>
    <property type="match status" value="1"/>
</dbReference>
<dbReference type="PROSITE" id="PS00152">
    <property type="entry name" value="ATPASE_ALPHA_BETA"/>
    <property type="match status" value="1"/>
</dbReference>
<accession>A1SS62</accession>
<keyword id="KW-0066">ATP synthesis</keyword>
<keyword id="KW-0067">ATP-binding</keyword>
<keyword id="KW-0997">Cell inner membrane</keyword>
<keyword id="KW-1003">Cell membrane</keyword>
<keyword id="KW-0139">CF(1)</keyword>
<keyword id="KW-0375">Hydrogen ion transport</keyword>
<keyword id="KW-0406">Ion transport</keyword>
<keyword id="KW-0472">Membrane</keyword>
<keyword id="KW-0547">Nucleotide-binding</keyword>
<keyword id="KW-1185">Reference proteome</keyword>
<keyword id="KW-1278">Translocase</keyword>
<keyword id="KW-0813">Transport</keyword>
<sequence>MTDLQQVVAHSFAALAASRTTFRAQLKAREIGIISSVSFGVAQVSGLANVASEEVLKFSGDIYGIAFNVDQDSIGVVLLGDYWQLQSGDEVERTGRVMDVAVGLGLLGRVIDPLGRPLDDKGPIESSERLPVERPAAPIMDRAPVTVPLQTGLKVIDALIPIGRGQRELILGDRQTGKTTIAIDTILNQHDQNVLCVYCAIGQRASAVAKTIAILKAKGALDYTLVMVSEGNAPPGFAYIAPYAATSIAEYFMEKGRDVLIVYDDLTQHARAYRELSLLLRRPPGREAFPGDIFYIHSRLLERATCLKQRHKGGSLTALPIIETEAQNISAYIPTNLISITDGQIYLSPTLFELGILPAVDVGRSVSRVGGKAQRPMYRAVAANLKLTYAQFEELETFARFGARLDQNSQDIITNGRRIRASLKQPQSSPMTVLEQITVLIALTEKLFDTVPLLKMREAEQALCLATTELPEDFLSRFNSAKILSDDDRNRIIDIARITLAPFQSPPDEDNGITSTPSN</sequence>
<evidence type="ECO:0000255" key="1">
    <source>
        <dbReference type="HAMAP-Rule" id="MF_01346"/>
    </source>
</evidence>
<reference key="1">
    <citation type="journal article" date="2008" name="BMC Genomics">
        <title>Genomics of an extreme psychrophile, Psychromonas ingrahamii.</title>
        <authorList>
            <person name="Riley M."/>
            <person name="Staley J.T."/>
            <person name="Danchin A."/>
            <person name="Wang T.Z."/>
            <person name="Brettin T.S."/>
            <person name="Hauser L.J."/>
            <person name="Land M.L."/>
            <person name="Thompson L.S."/>
        </authorList>
    </citation>
    <scope>NUCLEOTIDE SEQUENCE [LARGE SCALE GENOMIC DNA]</scope>
    <source>
        <strain>DSM 17664 / CCUG 51855 / 37</strain>
    </source>
</reference>
<proteinExistence type="inferred from homology"/>
<gene>
    <name evidence="1" type="primary">atpA1</name>
    <name type="ordered locus">Ping_0470</name>
</gene>